<comment type="function">
    <text evidence="1">Catalyzes the methylthiolation of an aspartic acid residue of ribosomal protein uS12.</text>
</comment>
<comment type="catalytic activity">
    <reaction evidence="1">
        <text>L-aspartate(89)-[ribosomal protein uS12]-hydrogen + (sulfur carrier)-SH + AH2 + 2 S-adenosyl-L-methionine = 3-methylsulfanyl-L-aspartate(89)-[ribosomal protein uS12]-hydrogen + (sulfur carrier)-H + 5'-deoxyadenosine + L-methionine + A + S-adenosyl-L-homocysteine + 2 H(+)</text>
        <dbReference type="Rhea" id="RHEA:37087"/>
        <dbReference type="Rhea" id="RHEA-COMP:10460"/>
        <dbReference type="Rhea" id="RHEA-COMP:10461"/>
        <dbReference type="Rhea" id="RHEA-COMP:14737"/>
        <dbReference type="Rhea" id="RHEA-COMP:14739"/>
        <dbReference type="ChEBI" id="CHEBI:13193"/>
        <dbReference type="ChEBI" id="CHEBI:15378"/>
        <dbReference type="ChEBI" id="CHEBI:17319"/>
        <dbReference type="ChEBI" id="CHEBI:17499"/>
        <dbReference type="ChEBI" id="CHEBI:29917"/>
        <dbReference type="ChEBI" id="CHEBI:29961"/>
        <dbReference type="ChEBI" id="CHEBI:57844"/>
        <dbReference type="ChEBI" id="CHEBI:57856"/>
        <dbReference type="ChEBI" id="CHEBI:59789"/>
        <dbReference type="ChEBI" id="CHEBI:64428"/>
        <dbReference type="ChEBI" id="CHEBI:73599"/>
        <dbReference type="EC" id="2.8.4.4"/>
    </reaction>
</comment>
<comment type="cofactor">
    <cofactor evidence="1">
        <name>[4Fe-4S] cluster</name>
        <dbReference type="ChEBI" id="CHEBI:49883"/>
    </cofactor>
    <text evidence="1">Binds 2 [4Fe-4S] clusters. One cluster is coordinated with 3 cysteines and an exchangeable S-adenosyl-L-methionine.</text>
</comment>
<comment type="subcellular location">
    <subcellularLocation>
        <location evidence="1">Cytoplasm</location>
    </subcellularLocation>
</comment>
<comment type="similarity">
    <text evidence="1">Belongs to the methylthiotransferase family. RimO subfamily.</text>
</comment>
<accession>Q7W1U6</accession>
<gene>
    <name evidence="1" type="primary">rimO</name>
    <name type="ordered locus">BPP0250</name>
</gene>
<protein>
    <recommendedName>
        <fullName evidence="1">Ribosomal protein uS12 methylthiotransferase RimO</fullName>
        <shortName evidence="1">uS12 MTTase</shortName>
        <shortName evidence="1">uS12 methylthiotransferase</shortName>
        <ecNumber evidence="1">2.8.4.4</ecNumber>
    </recommendedName>
    <alternativeName>
        <fullName evidence="1">Ribosomal protein uS12 (aspartate-C(3))-methylthiotransferase</fullName>
    </alternativeName>
    <alternativeName>
        <fullName evidence="1">Ribosome maturation factor RimO</fullName>
    </alternativeName>
</protein>
<name>RIMO_BORPA</name>
<evidence type="ECO:0000255" key="1">
    <source>
        <dbReference type="HAMAP-Rule" id="MF_01865"/>
    </source>
</evidence>
<evidence type="ECO:0000255" key="2">
    <source>
        <dbReference type="PROSITE-ProRule" id="PRU01266"/>
    </source>
</evidence>
<feature type="chain" id="PRO_0000374714" description="Ribosomal protein uS12 methylthiotransferase RimO">
    <location>
        <begin position="1"/>
        <end position="439"/>
    </location>
</feature>
<feature type="domain" description="MTTase N-terminal" evidence="1">
    <location>
        <begin position="4"/>
        <end position="114"/>
    </location>
</feature>
<feature type="domain" description="Radical SAM core" evidence="2">
    <location>
        <begin position="133"/>
        <end position="370"/>
    </location>
</feature>
<feature type="domain" description="TRAM" evidence="1">
    <location>
        <begin position="373"/>
        <end position="439"/>
    </location>
</feature>
<feature type="binding site" evidence="1">
    <location>
        <position position="13"/>
    </location>
    <ligand>
        <name>[4Fe-4S] cluster</name>
        <dbReference type="ChEBI" id="CHEBI:49883"/>
        <label>1</label>
    </ligand>
</feature>
<feature type="binding site" evidence="1">
    <location>
        <position position="49"/>
    </location>
    <ligand>
        <name>[4Fe-4S] cluster</name>
        <dbReference type="ChEBI" id="CHEBI:49883"/>
        <label>1</label>
    </ligand>
</feature>
<feature type="binding site" evidence="1">
    <location>
        <position position="78"/>
    </location>
    <ligand>
        <name>[4Fe-4S] cluster</name>
        <dbReference type="ChEBI" id="CHEBI:49883"/>
        <label>1</label>
    </ligand>
</feature>
<feature type="binding site" evidence="1">
    <location>
        <position position="147"/>
    </location>
    <ligand>
        <name>[4Fe-4S] cluster</name>
        <dbReference type="ChEBI" id="CHEBI:49883"/>
        <label>2</label>
        <note>4Fe-4S-S-AdoMet</note>
    </ligand>
</feature>
<feature type="binding site" evidence="1">
    <location>
        <position position="151"/>
    </location>
    <ligand>
        <name>[4Fe-4S] cluster</name>
        <dbReference type="ChEBI" id="CHEBI:49883"/>
        <label>2</label>
        <note>4Fe-4S-S-AdoMet</note>
    </ligand>
</feature>
<feature type="binding site" evidence="1">
    <location>
        <position position="154"/>
    </location>
    <ligand>
        <name>[4Fe-4S] cluster</name>
        <dbReference type="ChEBI" id="CHEBI:49883"/>
        <label>2</label>
        <note>4Fe-4S-S-AdoMet</note>
    </ligand>
</feature>
<proteinExistence type="inferred from homology"/>
<sequence>MSSPKVGFVSLGCPKALVDSERILTQLRTEGYEVTPEYNDADVVVVNTCGFIDSAKAESLEAIGEAIAENGKVIVTGCMGVEESVIRQVHPSVLAVTGPQQYEEVVRAVHGVAPPRQDHNPYLDLVPPQGVKLTPRHYAYLKISEGCNHRCSFCIIPSMRGDLVSRPVGDVLSEAERLVRAGVKELLVISQDTSAYGVDIKYRSGFWNGRPVKTRMTELCAALSELGVWTRLHYVYPYPHVDEVIGLMADGKVLPYLDIPFQHASPRILRAMKRPAFEDKTLARIKRWREECPDLTLRSTFIVGFPGETEEDFQYLLDWMSEAQLDRVGCFQYSPVEGAPANTLDNPVPDEVKQERWERFMEHQQAISTARLSTRVGREIDVLIDSVDEEGAVGRSSADAPEIDGCVYVDSEQPLKAGDMVRVRVTDSDEYDLWGERIA</sequence>
<keyword id="KW-0004">4Fe-4S</keyword>
<keyword id="KW-0963">Cytoplasm</keyword>
<keyword id="KW-0408">Iron</keyword>
<keyword id="KW-0411">Iron-sulfur</keyword>
<keyword id="KW-0479">Metal-binding</keyword>
<keyword id="KW-0949">S-adenosyl-L-methionine</keyword>
<keyword id="KW-0808">Transferase</keyword>
<reference key="1">
    <citation type="journal article" date="2003" name="Nat. Genet.">
        <title>Comparative analysis of the genome sequences of Bordetella pertussis, Bordetella parapertussis and Bordetella bronchiseptica.</title>
        <authorList>
            <person name="Parkhill J."/>
            <person name="Sebaihia M."/>
            <person name="Preston A."/>
            <person name="Murphy L.D."/>
            <person name="Thomson N.R."/>
            <person name="Harris D.E."/>
            <person name="Holden M.T.G."/>
            <person name="Churcher C.M."/>
            <person name="Bentley S.D."/>
            <person name="Mungall K.L."/>
            <person name="Cerdeno-Tarraga A.-M."/>
            <person name="Temple L."/>
            <person name="James K.D."/>
            <person name="Harris B."/>
            <person name="Quail M.A."/>
            <person name="Achtman M."/>
            <person name="Atkin R."/>
            <person name="Baker S."/>
            <person name="Basham D."/>
            <person name="Bason N."/>
            <person name="Cherevach I."/>
            <person name="Chillingworth T."/>
            <person name="Collins M."/>
            <person name="Cronin A."/>
            <person name="Davis P."/>
            <person name="Doggett J."/>
            <person name="Feltwell T."/>
            <person name="Goble A."/>
            <person name="Hamlin N."/>
            <person name="Hauser H."/>
            <person name="Holroyd S."/>
            <person name="Jagels K."/>
            <person name="Leather S."/>
            <person name="Moule S."/>
            <person name="Norberczak H."/>
            <person name="O'Neil S."/>
            <person name="Ormond D."/>
            <person name="Price C."/>
            <person name="Rabbinowitsch E."/>
            <person name="Rutter S."/>
            <person name="Sanders M."/>
            <person name="Saunders D."/>
            <person name="Seeger K."/>
            <person name="Sharp S."/>
            <person name="Simmonds M."/>
            <person name="Skelton J."/>
            <person name="Squares R."/>
            <person name="Squares S."/>
            <person name="Stevens K."/>
            <person name="Unwin L."/>
            <person name="Whitehead S."/>
            <person name="Barrell B.G."/>
            <person name="Maskell D.J."/>
        </authorList>
    </citation>
    <scope>NUCLEOTIDE SEQUENCE [LARGE SCALE GENOMIC DNA]</scope>
    <source>
        <strain>12822 / ATCC BAA-587 / NCTC 13253</strain>
    </source>
</reference>
<organism>
    <name type="scientific">Bordetella parapertussis (strain 12822 / ATCC BAA-587 / NCTC 13253)</name>
    <dbReference type="NCBI Taxonomy" id="257311"/>
    <lineage>
        <taxon>Bacteria</taxon>
        <taxon>Pseudomonadati</taxon>
        <taxon>Pseudomonadota</taxon>
        <taxon>Betaproteobacteria</taxon>
        <taxon>Burkholderiales</taxon>
        <taxon>Alcaligenaceae</taxon>
        <taxon>Bordetella</taxon>
    </lineage>
</organism>
<dbReference type="EC" id="2.8.4.4" evidence="1"/>
<dbReference type="EMBL" id="BX640423">
    <property type="protein sequence ID" value="CAE39991.1"/>
    <property type="molecule type" value="Genomic_DNA"/>
</dbReference>
<dbReference type="RefSeq" id="WP_003807313.1">
    <property type="nucleotide sequence ID" value="NC_002928.3"/>
</dbReference>
<dbReference type="SMR" id="Q7W1U6"/>
<dbReference type="GeneID" id="69600271"/>
<dbReference type="GeneID" id="93206481"/>
<dbReference type="KEGG" id="bpa:BPP0250"/>
<dbReference type="HOGENOM" id="CLU_018697_0_0_4"/>
<dbReference type="Proteomes" id="UP000001421">
    <property type="component" value="Chromosome"/>
</dbReference>
<dbReference type="GO" id="GO:0005829">
    <property type="term" value="C:cytosol"/>
    <property type="evidence" value="ECO:0007669"/>
    <property type="project" value="TreeGrafter"/>
</dbReference>
<dbReference type="GO" id="GO:0051539">
    <property type="term" value="F:4 iron, 4 sulfur cluster binding"/>
    <property type="evidence" value="ECO:0007669"/>
    <property type="project" value="UniProtKB-UniRule"/>
</dbReference>
<dbReference type="GO" id="GO:0035599">
    <property type="term" value="F:aspartic acid methylthiotransferase activity"/>
    <property type="evidence" value="ECO:0007669"/>
    <property type="project" value="TreeGrafter"/>
</dbReference>
<dbReference type="GO" id="GO:0046872">
    <property type="term" value="F:metal ion binding"/>
    <property type="evidence" value="ECO:0007669"/>
    <property type="project" value="UniProtKB-KW"/>
</dbReference>
<dbReference type="GO" id="GO:0103039">
    <property type="term" value="F:protein methylthiotransferase activity"/>
    <property type="evidence" value="ECO:0007669"/>
    <property type="project" value="UniProtKB-EC"/>
</dbReference>
<dbReference type="GO" id="GO:0006400">
    <property type="term" value="P:tRNA modification"/>
    <property type="evidence" value="ECO:0007669"/>
    <property type="project" value="InterPro"/>
</dbReference>
<dbReference type="CDD" id="cd01335">
    <property type="entry name" value="Radical_SAM"/>
    <property type="match status" value="1"/>
</dbReference>
<dbReference type="FunFam" id="2.40.50.140:FF:000060">
    <property type="entry name" value="Ribosomal protein S12 methylthiotransferase RimO"/>
    <property type="match status" value="1"/>
</dbReference>
<dbReference type="FunFam" id="3.40.50.12160:FF:000002">
    <property type="entry name" value="Ribosomal protein S12 methylthiotransferase RimO"/>
    <property type="match status" value="1"/>
</dbReference>
<dbReference type="FunFam" id="3.80.30.20:FF:000001">
    <property type="entry name" value="tRNA-2-methylthio-N(6)-dimethylallyladenosine synthase 2"/>
    <property type="match status" value="1"/>
</dbReference>
<dbReference type="Gene3D" id="3.40.50.12160">
    <property type="entry name" value="Methylthiotransferase, N-terminal domain"/>
    <property type="match status" value="1"/>
</dbReference>
<dbReference type="Gene3D" id="2.40.50.140">
    <property type="entry name" value="Nucleic acid-binding proteins"/>
    <property type="match status" value="1"/>
</dbReference>
<dbReference type="Gene3D" id="3.80.30.20">
    <property type="entry name" value="tm_1862 like domain"/>
    <property type="match status" value="1"/>
</dbReference>
<dbReference type="HAMAP" id="MF_01865">
    <property type="entry name" value="MTTase_RimO"/>
    <property type="match status" value="1"/>
</dbReference>
<dbReference type="InterPro" id="IPR006638">
    <property type="entry name" value="Elp3/MiaA/NifB-like_rSAM"/>
</dbReference>
<dbReference type="InterPro" id="IPR005839">
    <property type="entry name" value="Methylthiotransferase"/>
</dbReference>
<dbReference type="InterPro" id="IPR020612">
    <property type="entry name" value="Methylthiotransferase_CS"/>
</dbReference>
<dbReference type="InterPro" id="IPR013848">
    <property type="entry name" value="Methylthiotransferase_N"/>
</dbReference>
<dbReference type="InterPro" id="IPR038135">
    <property type="entry name" value="Methylthiotransferase_N_sf"/>
</dbReference>
<dbReference type="InterPro" id="IPR012340">
    <property type="entry name" value="NA-bd_OB-fold"/>
</dbReference>
<dbReference type="InterPro" id="IPR005840">
    <property type="entry name" value="Ribosomal_uS12_MeSTrfase_RimO"/>
</dbReference>
<dbReference type="InterPro" id="IPR007197">
    <property type="entry name" value="rSAM"/>
</dbReference>
<dbReference type="InterPro" id="IPR023404">
    <property type="entry name" value="rSAM_horseshoe"/>
</dbReference>
<dbReference type="InterPro" id="IPR002792">
    <property type="entry name" value="TRAM_dom"/>
</dbReference>
<dbReference type="NCBIfam" id="TIGR01125">
    <property type="entry name" value="30S ribosomal protein S12 methylthiotransferase RimO"/>
    <property type="match status" value="1"/>
</dbReference>
<dbReference type="NCBIfam" id="TIGR00089">
    <property type="entry name" value="MiaB/RimO family radical SAM methylthiotransferase"/>
    <property type="match status" value="1"/>
</dbReference>
<dbReference type="PANTHER" id="PTHR43837">
    <property type="entry name" value="RIBOSOMAL PROTEIN S12 METHYLTHIOTRANSFERASE RIMO"/>
    <property type="match status" value="1"/>
</dbReference>
<dbReference type="PANTHER" id="PTHR43837:SF1">
    <property type="entry name" value="RIBOSOMAL PROTEIN US12 METHYLTHIOTRANSFERASE RIMO"/>
    <property type="match status" value="1"/>
</dbReference>
<dbReference type="Pfam" id="PF04055">
    <property type="entry name" value="Radical_SAM"/>
    <property type="match status" value="1"/>
</dbReference>
<dbReference type="Pfam" id="PF18693">
    <property type="entry name" value="TRAM_2"/>
    <property type="match status" value="1"/>
</dbReference>
<dbReference type="Pfam" id="PF00919">
    <property type="entry name" value="UPF0004"/>
    <property type="match status" value="1"/>
</dbReference>
<dbReference type="SFLD" id="SFLDG01082">
    <property type="entry name" value="B12-binding_domain_containing"/>
    <property type="match status" value="1"/>
</dbReference>
<dbReference type="SFLD" id="SFLDG01061">
    <property type="entry name" value="methylthiotransferase"/>
    <property type="match status" value="1"/>
</dbReference>
<dbReference type="SFLD" id="SFLDF00274">
    <property type="entry name" value="ribosomal_protein_S12_methylth"/>
    <property type="match status" value="1"/>
</dbReference>
<dbReference type="SMART" id="SM00729">
    <property type="entry name" value="Elp3"/>
    <property type="match status" value="1"/>
</dbReference>
<dbReference type="SUPFAM" id="SSF102114">
    <property type="entry name" value="Radical SAM enzymes"/>
    <property type="match status" value="1"/>
</dbReference>
<dbReference type="PROSITE" id="PS51449">
    <property type="entry name" value="MTTASE_N"/>
    <property type="match status" value="1"/>
</dbReference>
<dbReference type="PROSITE" id="PS01278">
    <property type="entry name" value="MTTASE_RADICAL"/>
    <property type="match status" value="1"/>
</dbReference>
<dbReference type="PROSITE" id="PS51918">
    <property type="entry name" value="RADICAL_SAM"/>
    <property type="match status" value="1"/>
</dbReference>
<dbReference type="PROSITE" id="PS50926">
    <property type="entry name" value="TRAM"/>
    <property type="match status" value="1"/>
</dbReference>